<reference key="1">
    <citation type="journal article" date="2004" name="J. Bacteriol.">
        <title>Complete genome sequence of Rickettsia typhi and comparison with sequences of other Rickettsiae.</title>
        <authorList>
            <person name="McLeod M.P."/>
            <person name="Qin X."/>
            <person name="Karpathy S.E."/>
            <person name="Gioia J."/>
            <person name="Highlander S.K."/>
            <person name="Fox G.E."/>
            <person name="McNeill T.Z."/>
            <person name="Jiang H."/>
            <person name="Muzny D."/>
            <person name="Jacob L.S."/>
            <person name="Hawes A.C."/>
            <person name="Sodergren E."/>
            <person name="Gill R."/>
            <person name="Hume J."/>
            <person name="Morgan M."/>
            <person name="Fan G."/>
            <person name="Amin A.G."/>
            <person name="Gibbs R.A."/>
            <person name="Hong C."/>
            <person name="Yu X.-J."/>
            <person name="Walker D.H."/>
            <person name="Weinstock G.M."/>
        </authorList>
    </citation>
    <scope>NUCLEOTIDE SEQUENCE [LARGE SCALE GENOMIC DNA]</scope>
    <source>
        <strain>ATCC VR-144 / Wilmington</strain>
    </source>
</reference>
<accession>Q68X19</accession>
<comment type="function">
    <text evidence="1">NDH-1 shuttles electrons from NADH, via FMN and iron-sulfur (Fe-S) centers, to quinones in the respiratory chain. The immediate electron acceptor for the enzyme in this species is believed to be ubiquinone. Couples the redox reaction to proton translocation (for every two electrons transferred, four hydrogen ions are translocated across the cytoplasmic membrane), and thus conserves the redox energy in a proton gradient.</text>
</comment>
<comment type="catalytic activity">
    <reaction evidence="1">
        <text>a quinone + NADH + 5 H(+)(in) = a quinol + NAD(+) + 4 H(+)(out)</text>
        <dbReference type="Rhea" id="RHEA:57888"/>
        <dbReference type="ChEBI" id="CHEBI:15378"/>
        <dbReference type="ChEBI" id="CHEBI:24646"/>
        <dbReference type="ChEBI" id="CHEBI:57540"/>
        <dbReference type="ChEBI" id="CHEBI:57945"/>
        <dbReference type="ChEBI" id="CHEBI:132124"/>
    </reaction>
</comment>
<comment type="subunit">
    <text evidence="1">NDH-1 is composed of 14 different subunits. Subunits NuoB, C, D, E, F, and G constitute the peripheral sector of the complex.</text>
</comment>
<comment type="subcellular location">
    <subcellularLocation>
        <location evidence="1">Cell inner membrane</location>
        <topology evidence="1">Peripheral membrane protein</topology>
        <orientation evidence="1">Cytoplasmic side</orientation>
    </subcellularLocation>
</comment>
<comment type="similarity">
    <text evidence="1">Belongs to the complex I 49 kDa subunit family.</text>
</comment>
<comment type="sequence caution" evidence="2">
    <conflict type="erroneous initiation">
        <sequence resource="EMBL-CDS" id="AAU03823"/>
    </conflict>
</comment>
<dbReference type="EC" id="7.1.1.-" evidence="1"/>
<dbReference type="EMBL" id="AE017197">
    <property type="protein sequence ID" value="AAU03823.1"/>
    <property type="status" value="ALT_INIT"/>
    <property type="molecule type" value="Genomic_DNA"/>
</dbReference>
<dbReference type="RefSeq" id="WP_014419426.1">
    <property type="nucleotide sequence ID" value="NC_006142.1"/>
</dbReference>
<dbReference type="SMR" id="Q68X19"/>
<dbReference type="KEGG" id="rty:RT0343"/>
<dbReference type="eggNOG" id="COG0649">
    <property type="taxonomic scope" value="Bacteria"/>
</dbReference>
<dbReference type="HOGENOM" id="CLU_015134_1_0_5"/>
<dbReference type="OrthoDB" id="9801496at2"/>
<dbReference type="Proteomes" id="UP000000604">
    <property type="component" value="Chromosome"/>
</dbReference>
<dbReference type="GO" id="GO:0005886">
    <property type="term" value="C:plasma membrane"/>
    <property type="evidence" value="ECO:0007669"/>
    <property type="project" value="UniProtKB-SubCell"/>
</dbReference>
<dbReference type="GO" id="GO:0051287">
    <property type="term" value="F:NAD binding"/>
    <property type="evidence" value="ECO:0007669"/>
    <property type="project" value="InterPro"/>
</dbReference>
<dbReference type="GO" id="GO:0050136">
    <property type="term" value="F:NADH:ubiquinone reductase (non-electrogenic) activity"/>
    <property type="evidence" value="ECO:0007669"/>
    <property type="project" value="UniProtKB-UniRule"/>
</dbReference>
<dbReference type="GO" id="GO:0048038">
    <property type="term" value="F:quinone binding"/>
    <property type="evidence" value="ECO:0007669"/>
    <property type="project" value="UniProtKB-KW"/>
</dbReference>
<dbReference type="FunFam" id="1.10.645.10:FF:000005">
    <property type="entry name" value="NADH-quinone oxidoreductase subunit D"/>
    <property type="match status" value="1"/>
</dbReference>
<dbReference type="Gene3D" id="1.10.645.10">
    <property type="entry name" value="Cytochrome-c3 Hydrogenase, chain B"/>
    <property type="match status" value="1"/>
</dbReference>
<dbReference type="HAMAP" id="MF_01358">
    <property type="entry name" value="NDH1_NuoD"/>
    <property type="match status" value="1"/>
</dbReference>
<dbReference type="InterPro" id="IPR001135">
    <property type="entry name" value="NADH_Q_OxRdtase_suD"/>
</dbReference>
<dbReference type="InterPro" id="IPR014029">
    <property type="entry name" value="NADH_UbQ_OxRdtase_49kDa_CS"/>
</dbReference>
<dbReference type="InterPro" id="IPR022885">
    <property type="entry name" value="NDH1_su_D/H"/>
</dbReference>
<dbReference type="InterPro" id="IPR029014">
    <property type="entry name" value="NiFe-Hase_large"/>
</dbReference>
<dbReference type="NCBIfam" id="TIGR01962">
    <property type="entry name" value="NuoD"/>
    <property type="match status" value="1"/>
</dbReference>
<dbReference type="NCBIfam" id="NF004739">
    <property type="entry name" value="PRK06075.1"/>
    <property type="match status" value="1"/>
</dbReference>
<dbReference type="PANTHER" id="PTHR11993:SF10">
    <property type="entry name" value="NADH DEHYDROGENASE [UBIQUINONE] IRON-SULFUR PROTEIN 2, MITOCHONDRIAL"/>
    <property type="match status" value="1"/>
</dbReference>
<dbReference type="PANTHER" id="PTHR11993">
    <property type="entry name" value="NADH-UBIQUINONE OXIDOREDUCTASE 49 KDA SUBUNIT"/>
    <property type="match status" value="1"/>
</dbReference>
<dbReference type="Pfam" id="PF00346">
    <property type="entry name" value="Complex1_49kDa"/>
    <property type="match status" value="1"/>
</dbReference>
<dbReference type="SUPFAM" id="SSF56762">
    <property type="entry name" value="HydB/Nqo4-like"/>
    <property type="match status" value="1"/>
</dbReference>
<dbReference type="PROSITE" id="PS00535">
    <property type="entry name" value="COMPLEX1_49K"/>
    <property type="match status" value="1"/>
</dbReference>
<protein>
    <recommendedName>
        <fullName evidence="1">NADH-quinone oxidoreductase subunit D</fullName>
        <ecNumber evidence="1">7.1.1.-</ecNumber>
    </recommendedName>
    <alternativeName>
        <fullName evidence="1">NADH dehydrogenase I subunit D</fullName>
    </alternativeName>
    <alternativeName>
        <fullName evidence="1">NDH-1 subunit D</fullName>
    </alternativeName>
</protein>
<sequence length="389" mass="44469">MTNKTITLNLGPQHPATHGVLRLILEMDGEVVNNADPHIGLLHRGTEKLIEHKTYLQAIPYFDRLDYVSPMCQEHAFALAVESLLECSVPRRAQFIRVLFSELTRILNHTLNIGSQALDIGATTPLLWLFEEREKIMEFYERVSGSRMHANYFRPGGVAEDLPEKLLEDINKFIEQFPSKLNDIENLLNENRLWKQRLVDIGVVSQKDAMDWGFSGPMLRGSGIAWDLRKSNPYDVYDEMDFEVPVGKNGDCYDRYLVRILEMYESIKIIKQCIAKMPKGQVKTDNPKLTPPTREKMKESMEAMIHHFKLYTEGYDVPIGETYKAVEAPKGEFGVYLYSQGGNKPYRCRIKAPGFAHLQGLNFMSKGHLISDVITIIATLDIVFGEIDR</sequence>
<proteinExistence type="inferred from homology"/>
<gene>
    <name evidence="1" type="primary">nuoD</name>
    <name type="ordered locus">RT0343</name>
</gene>
<evidence type="ECO:0000255" key="1">
    <source>
        <dbReference type="HAMAP-Rule" id="MF_01358"/>
    </source>
</evidence>
<evidence type="ECO:0000305" key="2"/>
<name>NUOD_RICTY</name>
<keyword id="KW-0997">Cell inner membrane</keyword>
<keyword id="KW-1003">Cell membrane</keyword>
<keyword id="KW-0472">Membrane</keyword>
<keyword id="KW-0520">NAD</keyword>
<keyword id="KW-0874">Quinone</keyword>
<keyword id="KW-1278">Translocase</keyword>
<keyword id="KW-0813">Transport</keyword>
<keyword id="KW-0830">Ubiquinone</keyword>
<organism>
    <name type="scientific">Rickettsia typhi (strain ATCC VR-144 / Wilmington)</name>
    <dbReference type="NCBI Taxonomy" id="257363"/>
    <lineage>
        <taxon>Bacteria</taxon>
        <taxon>Pseudomonadati</taxon>
        <taxon>Pseudomonadota</taxon>
        <taxon>Alphaproteobacteria</taxon>
        <taxon>Rickettsiales</taxon>
        <taxon>Rickettsiaceae</taxon>
        <taxon>Rickettsieae</taxon>
        <taxon>Rickettsia</taxon>
        <taxon>typhus group</taxon>
    </lineage>
</organism>
<feature type="chain" id="PRO_0000287865" description="NADH-quinone oxidoreductase subunit D">
    <location>
        <begin position="1"/>
        <end position="389"/>
    </location>
</feature>